<protein>
    <recommendedName>
        <fullName evidence="7">ESX-5 secretion system protein EccD5</fullName>
    </recommendedName>
    <alternativeName>
        <fullName evidence="6">ESX conserved component D5</fullName>
    </alternativeName>
    <alternativeName>
        <fullName evidence="7">Type VII secretion system protein EccD5</fullName>
        <shortName evidence="7">T7SS protein EccD5</shortName>
    </alternativeName>
</protein>
<keyword id="KW-0002">3D-structure</keyword>
<keyword id="KW-0997">Cell inner membrane</keyword>
<keyword id="KW-1003">Cell membrane</keyword>
<keyword id="KW-0472">Membrane</keyword>
<keyword id="KW-1185">Reference proteome</keyword>
<keyword id="KW-0812">Transmembrane</keyword>
<keyword id="KW-1133">Transmembrane helix</keyword>
<keyword id="KW-0813">Transport</keyword>
<sequence length="503" mass="53435">MTAVADAPQADIEGVASPQAVVVGVMAGEGVQIGVLLDANAPVSVMTDPLLKVVNSRLRELGEAPLEATGRGRWALCLVDGAPLRATQSLTEQDVYDGDRLWIRFIADTERRSQVIEHISTAVASDLSKRFARIDPIVAVQVGASMVATGVVLATGVLGWWRWHHNTWLTTIYTAVIGVLVLAVAMLLLMRAKTDADRRVADIMLMSAIMPVTVAAAAAPPGPVGSPQAVLGFGVLTVAAALALRFTGRRLGIYTTIVIIGALTMLAALARMVAATSAVTLLSSLLLICVVAYHAAPALSRRLAGIRLPVFPSATSRWVFEARPDLPTTVVVSGGSAPVLEGPSSVRDVLLQAERARSFLSGLLTGLGVMVVVCMTSLCDPHTGQRWLPLILAGFTSGFLLLRGRSYVDRWQSITLAGTAVIIAAAVCVRYALELSSPLAVSIVAAILVLLPAAGMAAAAHVPHTIYSPLFRKFVEWIEYLCLMPIFPLALWLMNVYAAIRYR</sequence>
<organism>
    <name type="scientific">Mycobacterium tuberculosis (strain ATCC 25618 / H37Rv)</name>
    <dbReference type="NCBI Taxonomy" id="83332"/>
    <lineage>
        <taxon>Bacteria</taxon>
        <taxon>Bacillati</taxon>
        <taxon>Actinomycetota</taxon>
        <taxon>Actinomycetes</taxon>
        <taxon>Mycobacteriales</taxon>
        <taxon>Mycobacteriaceae</taxon>
        <taxon>Mycobacterium</taxon>
        <taxon>Mycobacterium tuberculosis complex</taxon>
    </lineage>
</organism>
<evidence type="ECO:0000250" key="1">
    <source>
        <dbReference type="UniProtKB" id="B2HSU6"/>
    </source>
</evidence>
<evidence type="ECO:0000255" key="2"/>
<evidence type="ECO:0000269" key="3">
    <source>
    </source>
</evidence>
<evidence type="ECO:0000269" key="4">
    <source>
    </source>
</evidence>
<evidence type="ECO:0000269" key="5">
    <source>
    </source>
</evidence>
<evidence type="ECO:0000303" key="6">
    <source>
    </source>
</evidence>
<evidence type="ECO:0000305" key="7"/>
<name>ECCD5_MYCTU</name>
<proteinExistence type="evidence at protein level"/>
<feature type="chain" id="PRO_0000393237" description="ESX-5 secretion system protein EccD5">
    <location>
        <begin position="1"/>
        <end position="503"/>
    </location>
</feature>
<feature type="transmembrane region" description="Helical" evidence="2">
    <location>
        <begin position="137"/>
        <end position="157"/>
    </location>
</feature>
<feature type="transmembrane region" description="Helical" evidence="2">
    <location>
        <begin position="169"/>
        <end position="189"/>
    </location>
</feature>
<feature type="transmembrane region" description="Helical" evidence="2">
    <location>
        <begin position="200"/>
        <end position="220"/>
    </location>
</feature>
<feature type="transmembrane region" description="Helical" evidence="2">
    <location>
        <begin position="224"/>
        <end position="244"/>
    </location>
</feature>
<feature type="transmembrane region" description="Helical" evidence="2">
    <location>
        <begin position="250"/>
        <end position="270"/>
    </location>
</feature>
<feature type="transmembrane region" description="Helical" evidence="2">
    <location>
        <begin position="272"/>
        <end position="292"/>
    </location>
</feature>
<feature type="transmembrane region" description="Helical" evidence="2">
    <location>
        <begin position="359"/>
        <end position="379"/>
    </location>
</feature>
<feature type="transmembrane region" description="Helical" evidence="2">
    <location>
        <begin position="382"/>
        <end position="402"/>
    </location>
</feature>
<feature type="transmembrane region" description="Helical" evidence="2">
    <location>
        <begin position="413"/>
        <end position="433"/>
    </location>
</feature>
<feature type="transmembrane region" description="Helical" evidence="2">
    <location>
        <begin position="439"/>
        <end position="459"/>
    </location>
</feature>
<feature type="transmembrane region" description="Helical" evidence="2">
    <location>
        <begin position="480"/>
        <end position="500"/>
    </location>
</feature>
<reference key="1">
    <citation type="journal article" date="1998" name="Nature">
        <title>Deciphering the biology of Mycobacterium tuberculosis from the complete genome sequence.</title>
        <authorList>
            <person name="Cole S.T."/>
            <person name="Brosch R."/>
            <person name="Parkhill J."/>
            <person name="Garnier T."/>
            <person name="Churcher C.M."/>
            <person name="Harris D.E."/>
            <person name="Gordon S.V."/>
            <person name="Eiglmeier K."/>
            <person name="Gas S."/>
            <person name="Barry C.E. III"/>
            <person name="Tekaia F."/>
            <person name="Badcock K."/>
            <person name="Basham D."/>
            <person name="Brown D."/>
            <person name="Chillingworth T."/>
            <person name="Connor R."/>
            <person name="Davies R.M."/>
            <person name="Devlin K."/>
            <person name="Feltwell T."/>
            <person name="Gentles S."/>
            <person name="Hamlin N."/>
            <person name="Holroyd S."/>
            <person name="Hornsby T."/>
            <person name="Jagels K."/>
            <person name="Krogh A."/>
            <person name="McLean J."/>
            <person name="Moule S."/>
            <person name="Murphy L.D."/>
            <person name="Oliver S."/>
            <person name="Osborne J."/>
            <person name="Quail M.A."/>
            <person name="Rajandream M.A."/>
            <person name="Rogers J."/>
            <person name="Rutter S."/>
            <person name="Seeger K."/>
            <person name="Skelton S."/>
            <person name="Squares S."/>
            <person name="Squares R."/>
            <person name="Sulston J.E."/>
            <person name="Taylor K."/>
            <person name="Whitehead S."/>
            <person name="Barrell B.G."/>
        </authorList>
    </citation>
    <scope>NUCLEOTIDE SEQUENCE [LARGE SCALE GENOMIC DNA]</scope>
    <source>
        <strain>ATCC 25618 / H37Rv</strain>
    </source>
</reference>
<reference key="2">
    <citation type="journal article" date="2008" name="BMC Syst. Biol.">
        <title>targetTB: a target identification pipeline for Mycobacterium tuberculosis through an interactome, reactome and genome-scale structural analysis.</title>
        <authorList>
            <person name="Raman K."/>
            <person name="Yeturu K."/>
            <person name="Chandra N."/>
        </authorList>
    </citation>
    <scope>IDENTIFICATION AS A DRUG TARGET [LARGE SCALE ANALYSIS]</scope>
</reference>
<reference key="3">
    <citation type="journal article" date="2009" name="PLoS Pathog.">
        <title>Systematic genetic nomenclature for type VII secretion systems.</title>
        <authorList>
            <person name="Bitter W."/>
            <person name="Houben E.N."/>
            <person name="Bottai D."/>
            <person name="Brodin P."/>
            <person name="Brown E.J."/>
            <person name="Cox J.S."/>
            <person name="Derbyshire K."/>
            <person name="Fortune S.M."/>
            <person name="Gao L.Y."/>
            <person name="Liu J."/>
            <person name="Gey van Pittius N.C."/>
            <person name="Pym A.S."/>
            <person name="Rubin E.J."/>
            <person name="Sherman D.R."/>
            <person name="Cole S.T."/>
            <person name="Brosch R."/>
        </authorList>
    </citation>
    <scope>NOMENCLATURE</scope>
</reference>
<reference key="4">
    <citation type="journal article" date="2011" name="Mol. Cell. Proteomics">
        <title>Proteogenomic analysis of Mycobacterium tuberculosis by high resolution mass spectrometry.</title>
        <authorList>
            <person name="Kelkar D.S."/>
            <person name="Kumar D."/>
            <person name="Kumar P."/>
            <person name="Balakrishnan L."/>
            <person name="Muthusamy B."/>
            <person name="Yadav A.K."/>
            <person name="Shrivastava P."/>
            <person name="Marimuthu A."/>
            <person name="Anand S."/>
            <person name="Sundaram H."/>
            <person name="Kingsbury R."/>
            <person name="Harsha H.C."/>
            <person name="Nair B."/>
            <person name="Prasad T.S."/>
            <person name="Chauhan D.S."/>
            <person name="Katoch K."/>
            <person name="Katoch V.M."/>
            <person name="Kumar P."/>
            <person name="Chaerkady R."/>
            <person name="Ramachandran S."/>
            <person name="Dash D."/>
            <person name="Pandey A."/>
        </authorList>
    </citation>
    <scope>IDENTIFICATION BY MASS SPECTROMETRY [LARGE SCALE ANALYSIS]</scope>
    <source>
        <strain>ATCC 25618 / H37Rv</strain>
    </source>
</reference>
<reference key="5">
    <citation type="journal article" date="2012" name="Mol. Microbiol.">
        <title>Disruption of the ESX-5 system of Mycobacterium tuberculosis causes loss of PPE protein secretion, reduction of cell wall integrity and strong attenuation.</title>
        <authorList>
            <person name="Bottai D."/>
            <person name="Di Luca M."/>
            <person name="Majlessi L."/>
            <person name="Frigui W."/>
            <person name="Simeone R."/>
            <person name="Sayes F."/>
            <person name="Bitter W."/>
            <person name="Brennan M.J."/>
            <person name="Leclerc C."/>
            <person name="Batoni G."/>
            <person name="Campa M."/>
            <person name="Brosch R."/>
            <person name="Esin S."/>
        </authorList>
    </citation>
    <scope>FUNCTION</scope>
    <scope>DISRUPTION PHENOTYPE</scope>
    <source>
        <strain>H37Rv</strain>
    </source>
</reference>
<reference key="6">
    <citation type="journal article" date="2012" name="Mol. Microbiol.">
        <title>Composition of the type VII secretion system membrane complex.</title>
        <authorList>
            <person name="Houben E.N."/>
            <person name="Bestebroer J."/>
            <person name="Ummels R."/>
            <person name="Wilson L."/>
            <person name="Piersma S.R."/>
            <person name="Jimenez C.R."/>
            <person name="Ottenhoff T.H."/>
            <person name="Luirink J."/>
            <person name="Bitter W."/>
        </authorList>
    </citation>
    <scope>FUNCTION</scope>
    <scope>DISRUPTION PHENOTYPE</scope>
</reference>
<accession>P9WNP9</accession>
<accession>L0T9A2</accession>
<accession>O53944</accession>
<accession>Q7D7Y4</accession>
<dbReference type="EMBL" id="AL123456">
    <property type="protein sequence ID" value="CCP44561.1"/>
    <property type="molecule type" value="Genomic_DNA"/>
</dbReference>
<dbReference type="PIR" id="D70930">
    <property type="entry name" value="D70930"/>
</dbReference>
<dbReference type="RefSeq" id="NP_216311.1">
    <property type="nucleotide sequence ID" value="NC_000962.3"/>
</dbReference>
<dbReference type="RefSeq" id="WP_003900411.1">
    <property type="nucleotide sequence ID" value="NZ_NVQJ01000037.1"/>
</dbReference>
<dbReference type="PDB" id="7NP7">
    <property type="method" value="EM"/>
    <property type="resolution" value="4.03 A"/>
    <property type="chains" value="D1/D2/D3/D4/D5/D6/D7/D8/D9/DA/DB/DC=1-503"/>
</dbReference>
<dbReference type="PDB" id="7NPR">
    <property type="method" value="EM"/>
    <property type="resolution" value="3.82 A"/>
    <property type="chains" value="D1/D2/D3/D4/D5/D6/D7/D8/D9/DA/DB/DC=1-503"/>
</dbReference>
<dbReference type="PDB" id="7NPT">
    <property type="method" value="EM"/>
    <property type="resolution" value="3.27 A"/>
    <property type="chains" value="D7/D8=1-503"/>
</dbReference>
<dbReference type="PDB" id="7NPU">
    <property type="method" value="EM"/>
    <property type="resolution" value="4.48 A"/>
    <property type="chains" value="D1/D2/D3/D4/D5/D6/D7/D8/D9/DA/DB/DC=1-503"/>
</dbReference>
<dbReference type="PDB" id="7NPV">
    <property type="method" value="EM"/>
    <property type="resolution" value="6.66 A"/>
    <property type="chains" value="D1/D2/D3/D4/D5/D6/D7/D8/D9/DA/DB/DC=1-503"/>
</dbReference>
<dbReference type="PDBsum" id="7NP7"/>
<dbReference type="PDBsum" id="7NPR"/>
<dbReference type="PDBsum" id="7NPT"/>
<dbReference type="PDBsum" id="7NPU"/>
<dbReference type="PDBsum" id="7NPV"/>
<dbReference type="EMDB" id="EMD-12514"/>
<dbReference type="EMDB" id="EMD-12517"/>
<dbReference type="EMDB" id="EMD-12520"/>
<dbReference type="EMDB" id="EMD-12521"/>
<dbReference type="EMDB" id="EMD-12522"/>
<dbReference type="SMR" id="P9WNP9"/>
<dbReference type="STRING" id="83332.Rv1795"/>
<dbReference type="PaxDb" id="83332-Rv1795"/>
<dbReference type="DNASU" id="885628"/>
<dbReference type="GeneID" id="45425772"/>
<dbReference type="GeneID" id="885628"/>
<dbReference type="KEGG" id="mtu:Rv1795"/>
<dbReference type="KEGG" id="mtv:RVBD_1795"/>
<dbReference type="TubercuList" id="Rv1795"/>
<dbReference type="eggNOG" id="ENOG502ZAY5">
    <property type="taxonomic scope" value="Bacteria"/>
</dbReference>
<dbReference type="InParanoid" id="P9WNP9"/>
<dbReference type="OrthoDB" id="4711249at2"/>
<dbReference type="Proteomes" id="UP000001584">
    <property type="component" value="Chromosome"/>
</dbReference>
<dbReference type="GO" id="GO:0005886">
    <property type="term" value="C:plasma membrane"/>
    <property type="evidence" value="ECO:0007005"/>
    <property type="project" value="MTBBASE"/>
</dbReference>
<dbReference type="Gene3D" id="3.10.20.90">
    <property type="entry name" value="Phosphatidylinositol 3-kinase Catalytic Subunit, Chain A, domain 1"/>
    <property type="match status" value="1"/>
</dbReference>
<dbReference type="InterPro" id="IPR044049">
    <property type="entry name" value="EccD_transm"/>
</dbReference>
<dbReference type="InterPro" id="IPR006707">
    <property type="entry name" value="T7SS_EccD"/>
</dbReference>
<dbReference type="InterPro" id="IPR024962">
    <property type="entry name" value="YukD-like"/>
</dbReference>
<dbReference type="NCBIfam" id="TIGR03920">
    <property type="entry name" value="T7SS_EccD"/>
    <property type="match status" value="1"/>
</dbReference>
<dbReference type="Pfam" id="PF19053">
    <property type="entry name" value="EccD"/>
    <property type="match status" value="1"/>
</dbReference>
<dbReference type="Pfam" id="PF08817">
    <property type="entry name" value="YukD"/>
    <property type="match status" value="1"/>
</dbReference>
<dbReference type="PIRSF" id="PIRSF017804">
    <property type="entry name" value="Secretion_EccD1"/>
    <property type="match status" value="1"/>
</dbReference>
<gene>
    <name evidence="6" type="primary">eccD5</name>
    <name type="ordered locus">Rv1795</name>
</gene>
<comment type="function">
    <text evidence="4 5">Part of the ESX-5 specialized secretion system, which is responsible for the secretion of EsxN and a number of PE_PGRS and PPE proteins, including PPE41.</text>
</comment>
<comment type="subunit">
    <text evidence="1">Part of the ESX-5 / type VII secretion system (T7SS), which is composed of cytosolic and membrane components. The ESX-5 membrane complex is composed of EccB5, EccC5, EccD5 and EccE5.</text>
</comment>
<comment type="subcellular location">
    <subcellularLocation>
        <location evidence="1">Cell inner membrane</location>
        <topology evidence="2">Multi-pass membrane protein</topology>
    </subcellularLocation>
</comment>
<comment type="disruption phenotype">
    <text evidence="4 5">Mutants are defective in the secretion of EsxN, PPE41 and PE_PGRS proteins (PubMed:22340629, PubMed:22925462). Mutant is highly sensitive to detergents and hydrophilic antibiotics such as ampicillin, vancomycin and bacitracin (PubMed:22340629). Virulence is attenuated both in macrophages and in the severe combined immune-deficient mouse infection model (PubMed:22340629).</text>
</comment>
<comment type="miscellaneous">
    <text evidence="3">Was identified as a high-confidence drug target.</text>
</comment>
<comment type="similarity">
    <text evidence="7">Belongs to the EccD/Snm4 family.</text>
</comment>